<reference key="1">
    <citation type="submission" date="2008-06" db="EMBL/GenBank/DDBJ databases">
        <title>Complete sequence of Stenotrophomonas maltophilia R551-3.</title>
        <authorList>
            <consortium name="US DOE Joint Genome Institute"/>
            <person name="Lucas S."/>
            <person name="Copeland A."/>
            <person name="Lapidus A."/>
            <person name="Glavina del Rio T."/>
            <person name="Dalin E."/>
            <person name="Tice H."/>
            <person name="Pitluck S."/>
            <person name="Chain P."/>
            <person name="Malfatti S."/>
            <person name="Shin M."/>
            <person name="Vergez L."/>
            <person name="Lang D."/>
            <person name="Schmutz J."/>
            <person name="Larimer F."/>
            <person name="Land M."/>
            <person name="Hauser L."/>
            <person name="Kyrpides N."/>
            <person name="Mikhailova N."/>
            <person name="Taghavi S."/>
            <person name="Monchy S."/>
            <person name="Newman L."/>
            <person name="Vangronsveld J."/>
            <person name="van der Lelie D."/>
            <person name="Richardson P."/>
        </authorList>
    </citation>
    <scope>NUCLEOTIDE SEQUENCE [LARGE SCALE GENOMIC DNA]</scope>
    <source>
        <strain>R551-3</strain>
    </source>
</reference>
<evidence type="ECO:0000255" key="1">
    <source>
        <dbReference type="HAMAP-Rule" id="MF_00686"/>
    </source>
</evidence>
<keyword id="KW-0408">Iron</keyword>
<sequence length="89" mass="10256">MSRTVFCQYEQRDAEGLDFVPYPGELGQRIFNNIGKQAWAAWLAHQTMLINENRLSPRTPEHRAFLEGELVKFLFEKDAEKPAGFTPEA</sequence>
<name>FETP_STRM5</name>
<feature type="chain" id="PRO_1000131868" description="Probable Fe(2+)-trafficking protein">
    <location>
        <begin position="1"/>
        <end position="89"/>
    </location>
</feature>
<organism>
    <name type="scientific">Stenotrophomonas maltophilia (strain R551-3)</name>
    <dbReference type="NCBI Taxonomy" id="391008"/>
    <lineage>
        <taxon>Bacteria</taxon>
        <taxon>Pseudomonadati</taxon>
        <taxon>Pseudomonadota</taxon>
        <taxon>Gammaproteobacteria</taxon>
        <taxon>Lysobacterales</taxon>
        <taxon>Lysobacteraceae</taxon>
        <taxon>Stenotrophomonas</taxon>
        <taxon>Stenotrophomonas maltophilia group</taxon>
    </lineage>
</organism>
<comment type="function">
    <text evidence="1">Could be a mediator in iron transactions between iron acquisition and iron-requiring processes, such as synthesis and/or repair of Fe-S clusters in biosynthetic enzymes.</text>
</comment>
<comment type="similarity">
    <text evidence="1">Belongs to the Fe(2+)-trafficking protein family.</text>
</comment>
<dbReference type="EMBL" id="CP001111">
    <property type="protein sequence ID" value="ACF51249.1"/>
    <property type="molecule type" value="Genomic_DNA"/>
</dbReference>
<dbReference type="RefSeq" id="WP_004153160.1">
    <property type="nucleotide sequence ID" value="NC_011071.1"/>
</dbReference>
<dbReference type="SMR" id="B4SS10"/>
<dbReference type="STRING" id="391008.Smal_1544"/>
<dbReference type="KEGG" id="smt:Smal_1544"/>
<dbReference type="eggNOG" id="COG2924">
    <property type="taxonomic scope" value="Bacteria"/>
</dbReference>
<dbReference type="HOGENOM" id="CLU_170994_0_0_6"/>
<dbReference type="OrthoDB" id="9804318at2"/>
<dbReference type="Proteomes" id="UP000001867">
    <property type="component" value="Chromosome"/>
</dbReference>
<dbReference type="GO" id="GO:0005829">
    <property type="term" value="C:cytosol"/>
    <property type="evidence" value="ECO:0007669"/>
    <property type="project" value="TreeGrafter"/>
</dbReference>
<dbReference type="GO" id="GO:0005506">
    <property type="term" value="F:iron ion binding"/>
    <property type="evidence" value="ECO:0007669"/>
    <property type="project" value="UniProtKB-UniRule"/>
</dbReference>
<dbReference type="GO" id="GO:0034599">
    <property type="term" value="P:cellular response to oxidative stress"/>
    <property type="evidence" value="ECO:0007669"/>
    <property type="project" value="TreeGrafter"/>
</dbReference>
<dbReference type="FunFam" id="1.10.3880.10:FF:000001">
    <property type="entry name" value="Probable Fe(2+)-trafficking protein"/>
    <property type="match status" value="1"/>
</dbReference>
<dbReference type="Gene3D" id="1.10.3880.10">
    <property type="entry name" value="Fe(II) trafficking protein YggX"/>
    <property type="match status" value="1"/>
</dbReference>
<dbReference type="HAMAP" id="MF_00686">
    <property type="entry name" value="Fe_traffic_YggX"/>
    <property type="match status" value="1"/>
</dbReference>
<dbReference type="InterPro" id="IPR007457">
    <property type="entry name" value="Fe_traffick_prot_YggX"/>
</dbReference>
<dbReference type="InterPro" id="IPR036766">
    <property type="entry name" value="Fe_traffick_prot_YggX_sf"/>
</dbReference>
<dbReference type="NCBIfam" id="NF003817">
    <property type="entry name" value="PRK05408.1"/>
    <property type="match status" value="1"/>
</dbReference>
<dbReference type="PANTHER" id="PTHR36965">
    <property type="entry name" value="FE(2+)-TRAFFICKING PROTEIN-RELATED"/>
    <property type="match status" value="1"/>
</dbReference>
<dbReference type="PANTHER" id="PTHR36965:SF1">
    <property type="entry name" value="FE(2+)-TRAFFICKING PROTEIN-RELATED"/>
    <property type="match status" value="1"/>
</dbReference>
<dbReference type="Pfam" id="PF04362">
    <property type="entry name" value="Iron_traffic"/>
    <property type="match status" value="1"/>
</dbReference>
<dbReference type="PIRSF" id="PIRSF029827">
    <property type="entry name" value="Fe_traffic_YggX"/>
    <property type="match status" value="1"/>
</dbReference>
<dbReference type="SUPFAM" id="SSF111148">
    <property type="entry name" value="YggX-like"/>
    <property type="match status" value="1"/>
</dbReference>
<gene>
    <name type="ordered locus">Smal_1544</name>
</gene>
<accession>B4SS10</accession>
<protein>
    <recommendedName>
        <fullName evidence="1">Probable Fe(2+)-trafficking protein</fullName>
    </recommendedName>
</protein>
<proteinExistence type="inferred from homology"/>